<proteinExistence type="inferred from homology"/>
<reference key="1">
    <citation type="submission" date="2007-10" db="EMBL/GenBank/DDBJ databases">
        <title>Complete sequence of Shewanella pealeana ATCC 700345.</title>
        <authorList>
            <consortium name="US DOE Joint Genome Institute"/>
            <person name="Copeland A."/>
            <person name="Lucas S."/>
            <person name="Lapidus A."/>
            <person name="Barry K."/>
            <person name="Glavina del Rio T."/>
            <person name="Dalin E."/>
            <person name="Tice H."/>
            <person name="Pitluck S."/>
            <person name="Chertkov O."/>
            <person name="Brettin T."/>
            <person name="Bruce D."/>
            <person name="Detter J.C."/>
            <person name="Han C."/>
            <person name="Schmutz J."/>
            <person name="Larimer F."/>
            <person name="Land M."/>
            <person name="Hauser L."/>
            <person name="Kyrpides N."/>
            <person name="Kim E."/>
            <person name="Zhao J.-S.Z."/>
            <person name="Manno D."/>
            <person name="Hawari J."/>
            <person name="Richardson P."/>
        </authorList>
    </citation>
    <scope>NUCLEOTIDE SEQUENCE [LARGE SCALE GENOMIC DNA]</scope>
    <source>
        <strain>ATCC 700345 / ANG-SQ1</strain>
    </source>
</reference>
<gene>
    <name type="ordered locus">Spea_0803</name>
</gene>
<name>TRMN6_SHEPA</name>
<feature type="chain" id="PRO_0000387424" description="tRNA1(Val) (adenine(37)-N6)-methyltransferase">
    <location>
        <begin position="1"/>
        <end position="264"/>
    </location>
</feature>
<evidence type="ECO:0000255" key="1">
    <source>
        <dbReference type="HAMAP-Rule" id="MF_01872"/>
    </source>
</evidence>
<organism>
    <name type="scientific">Shewanella pealeana (strain ATCC 700345 / ANG-SQ1)</name>
    <dbReference type="NCBI Taxonomy" id="398579"/>
    <lineage>
        <taxon>Bacteria</taxon>
        <taxon>Pseudomonadati</taxon>
        <taxon>Pseudomonadota</taxon>
        <taxon>Gammaproteobacteria</taxon>
        <taxon>Alteromonadales</taxon>
        <taxon>Shewanellaceae</taxon>
        <taxon>Shewanella</taxon>
    </lineage>
</organism>
<sequence>MPFTFKLFHVDDSRCGMPVSTDGVLLGAWAPLVQAKTILDIGAGSGLLSLMAAQRSLAKITAIEVDTDAALDCQQNFNASPWFDRLEVICCDIQAYAQAHTQVHSQAHNHAEQSKQFEHIICNPPYFANGPQSSNVSRATARHTDSLSFDSLLAAIKQLLSPEGCASLILPTESVSLFETKLSTYQLELSQKLLAASVEGKEANRQILVLRHTSALAHDPKTETEPAVVAKLEDAAQQQLYIREKNGQYSQAFSLLSRDFYLKL</sequence>
<comment type="function">
    <text evidence="1">Specifically methylates the adenine in position 37 of tRNA(1)(Val) (anticodon cmo5UAC).</text>
</comment>
<comment type="catalytic activity">
    <reaction evidence="1">
        <text>adenosine(37) in tRNA1(Val) + S-adenosyl-L-methionine = N(6)-methyladenosine(37) in tRNA1(Val) + S-adenosyl-L-homocysteine + H(+)</text>
        <dbReference type="Rhea" id="RHEA:43160"/>
        <dbReference type="Rhea" id="RHEA-COMP:10369"/>
        <dbReference type="Rhea" id="RHEA-COMP:10370"/>
        <dbReference type="ChEBI" id="CHEBI:15378"/>
        <dbReference type="ChEBI" id="CHEBI:57856"/>
        <dbReference type="ChEBI" id="CHEBI:59789"/>
        <dbReference type="ChEBI" id="CHEBI:74411"/>
        <dbReference type="ChEBI" id="CHEBI:74449"/>
        <dbReference type="EC" id="2.1.1.223"/>
    </reaction>
</comment>
<comment type="subcellular location">
    <subcellularLocation>
        <location evidence="1">Cytoplasm</location>
    </subcellularLocation>
</comment>
<comment type="similarity">
    <text evidence="1">Belongs to the methyltransferase superfamily. tRNA (adenine-N(6)-)-methyltransferase family.</text>
</comment>
<accession>A8H0P3</accession>
<dbReference type="EC" id="2.1.1.223" evidence="1"/>
<dbReference type="EMBL" id="CP000851">
    <property type="protein sequence ID" value="ABV86130.1"/>
    <property type="molecule type" value="Genomic_DNA"/>
</dbReference>
<dbReference type="RefSeq" id="WP_012154064.1">
    <property type="nucleotide sequence ID" value="NC_009901.1"/>
</dbReference>
<dbReference type="SMR" id="A8H0P3"/>
<dbReference type="STRING" id="398579.Spea_0803"/>
<dbReference type="KEGG" id="spl:Spea_0803"/>
<dbReference type="eggNOG" id="COG4123">
    <property type="taxonomic scope" value="Bacteria"/>
</dbReference>
<dbReference type="HOGENOM" id="CLU_061983_0_0_6"/>
<dbReference type="OrthoDB" id="5383291at2"/>
<dbReference type="Proteomes" id="UP000002608">
    <property type="component" value="Chromosome"/>
</dbReference>
<dbReference type="GO" id="GO:0005737">
    <property type="term" value="C:cytoplasm"/>
    <property type="evidence" value="ECO:0007669"/>
    <property type="project" value="UniProtKB-SubCell"/>
</dbReference>
<dbReference type="GO" id="GO:0003676">
    <property type="term" value="F:nucleic acid binding"/>
    <property type="evidence" value="ECO:0007669"/>
    <property type="project" value="InterPro"/>
</dbReference>
<dbReference type="GO" id="GO:0000179">
    <property type="term" value="F:rRNA (adenine-N6,N6-)-dimethyltransferase activity"/>
    <property type="evidence" value="ECO:0007669"/>
    <property type="project" value="InterPro"/>
</dbReference>
<dbReference type="GO" id="GO:0016430">
    <property type="term" value="F:tRNA (adenine-N6)-methyltransferase activity"/>
    <property type="evidence" value="ECO:0007669"/>
    <property type="project" value="UniProtKB-UniRule"/>
</dbReference>
<dbReference type="GO" id="GO:0008033">
    <property type="term" value="P:tRNA processing"/>
    <property type="evidence" value="ECO:0007669"/>
    <property type="project" value="UniProtKB-UniRule"/>
</dbReference>
<dbReference type="CDD" id="cd02440">
    <property type="entry name" value="AdoMet_MTases"/>
    <property type="match status" value="1"/>
</dbReference>
<dbReference type="Gene3D" id="3.40.50.150">
    <property type="entry name" value="Vaccinia Virus protein VP39"/>
    <property type="match status" value="1"/>
</dbReference>
<dbReference type="HAMAP" id="MF_01872">
    <property type="entry name" value="tRNA_methyltr_YfiC"/>
    <property type="match status" value="1"/>
</dbReference>
<dbReference type="InterPro" id="IPR002052">
    <property type="entry name" value="DNA_methylase_N6_adenine_CS"/>
</dbReference>
<dbReference type="InterPro" id="IPR020596">
    <property type="entry name" value="rRNA_Ade_Mease_Trfase_CS"/>
</dbReference>
<dbReference type="InterPro" id="IPR029063">
    <property type="entry name" value="SAM-dependent_MTases_sf"/>
</dbReference>
<dbReference type="InterPro" id="IPR050210">
    <property type="entry name" value="tRNA_Adenine-N(6)_MTase"/>
</dbReference>
<dbReference type="InterPro" id="IPR022882">
    <property type="entry name" value="tRNA_adenine-N6_MeTrfase"/>
</dbReference>
<dbReference type="PANTHER" id="PTHR47739">
    <property type="entry name" value="TRNA1(VAL) (ADENINE(37)-N6)-METHYLTRANSFERASE"/>
    <property type="match status" value="1"/>
</dbReference>
<dbReference type="PANTHER" id="PTHR47739:SF1">
    <property type="entry name" value="TRNA1(VAL) (ADENINE(37)-N6)-METHYLTRANSFERASE"/>
    <property type="match status" value="1"/>
</dbReference>
<dbReference type="Pfam" id="PF03602">
    <property type="entry name" value="Cons_hypoth95"/>
    <property type="match status" value="1"/>
</dbReference>
<dbReference type="SUPFAM" id="SSF53335">
    <property type="entry name" value="S-adenosyl-L-methionine-dependent methyltransferases"/>
    <property type="match status" value="1"/>
</dbReference>
<dbReference type="PROSITE" id="PS00092">
    <property type="entry name" value="N6_MTASE"/>
    <property type="match status" value="1"/>
</dbReference>
<protein>
    <recommendedName>
        <fullName evidence="1">tRNA1(Val) (adenine(37)-N6)-methyltransferase</fullName>
        <ecNumber evidence="1">2.1.1.223</ecNumber>
    </recommendedName>
    <alternativeName>
        <fullName evidence="1">tRNA m6A37 methyltransferase</fullName>
    </alternativeName>
</protein>
<keyword id="KW-0963">Cytoplasm</keyword>
<keyword id="KW-0489">Methyltransferase</keyword>
<keyword id="KW-1185">Reference proteome</keyword>
<keyword id="KW-0949">S-adenosyl-L-methionine</keyword>
<keyword id="KW-0808">Transferase</keyword>
<keyword id="KW-0819">tRNA processing</keyword>